<keyword id="KW-0067">ATP-binding</keyword>
<keyword id="KW-0963">Cytoplasm</keyword>
<keyword id="KW-0227">DNA damage</keyword>
<keyword id="KW-0234">DNA repair</keyword>
<keyword id="KW-0235">DNA replication</keyword>
<keyword id="KW-0238">DNA-binding</keyword>
<keyword id="KW-0547">Nucleotide-binding</keyword>
<keyword id="KW-1185">Reference proteome</keyword>
<keyword id="KW-0742">SOS response</keyword>
<proteinExistence type="inferred from homology"/>
<accession>P0C0D1</accession>
<accession>P49999</accession>
<accession>Q48W02</accession>
<sequence>MWIKELELKHYRNYDHLLASFSSGLNVFIGNNAQGKTNFLEAIYFLSLTRSHRTRADKELIHFDHSTVSLTGKIQRISGTVDLEINLSDKGRVTKINALKQAKLSDYIGTMMVVLFAPEDLQLVKGAPSLRRKFIDIDLGQIKPVYLSELSHYNHVLKQRNSYLKSAQQIDAAFLAVLDEQLASYGARVMEHRIDFINALEKEANTHHQAISNGLESLSLSYQSSVVFDKKTNIYQQFLHQLEKNHQKDFFRKNTSVGPHRDELAFYINGMNANFASQGQHRSLILSLKMAEVSLMKALTGDNPILLLDDVMSELDNTRQTKLLETVIKENVQTFITTTSLDHLSQLPEGIRIFHVTKGTVQIDSDIH</sequence>
<reference key="1">
    <citation type="journal article" date="2001" name="Proc. Natl. Acad. Sci. U.S.A.">
        <title>Complete genome sequence of an M1 strain of Streptococcus pyogenes.</title>
        <authorList>
            <person name="Ferretti J.J."/>
            <person name="McShan W.M."/>
            <person name="Ajdic D.J."/>
            <person name="Savic D.J."/>
            <person name="Savic G."/>
            <person name="Lyon K."/>
            <person name="Primeaux C."/>
            <person name="Sezate S."/>
            <person name="Suvorov A.N."/>
            <person name="Kenton S."/>
            <person name="Lai H.S."/>
            <person name="Lin S.P."/>
            <person name="Qian Y."/>
            <person name="Jia H.G."/>
            <person name="Najar F.Z."/>
            <person name="Ren Q."/>
            <person name="Zhu H."/>
            <person name="Song L."/>
            <person name="White J."/>
            <person name="Yuan X."/>
            <person name="Clifton S.W."/>
            <person name="Roe B.A."/>
            <person name="McLaughlin R.E."/>
        </authorList>
    </citation>
    <scope>NUCLEOTIDE SEQUENCE [LARGE SCALE GENOMIC DNA]</scope>
    <source>
        <strain>ATCC 700294 / SF370 / Serotype M1</strain>
    </source>
</reference>
<reference key="2">
    <citation type="journal article" date="2005" name="J. Infect. Dis.">
        <title>Evolutionary origin and emergence of a highly successful clone of serotype M1 group A Streptococcus involved multiple horizontal gene transfer events.</title>
        <authorList>
            <person name="Sumby P."/>
            <person name="Porcella S.F."/>
            <person name="Madrigal A.G."/>
            <person name="Barbian K.D."/>
            <person name="Virtaneva K."/>
            <person name="Ricklefs S.M."/>
            <person name="Sturdevant D.E."/>
            <person name="Graham M.R."/>
            <person name="Vuopio-Varkila J."/>
            <person name="Hoe N.P."/>
            <person name="Musser J.M."/>
        </authorList>
    </citation>
    <scope>NUCLEOTIDE SEQUENCE [LARGE SCALE GENOMIC DNA]</scope>
    <source>
        <strain>ATCC BAA-947 / MGAS5005 / Serotype M1</strain>
    </source>
</reference>
<organism>
    <name type="scientific">Streptococcus pyogenes serotype M1</name>
    <dbReference type="NCBI Taxonomy" id="301447"/>
    <lineage>
        <taxon>Bacteria</taxon>
        <taxon>Bacillati</taxon>
        <taxon>Bacillota</taxon>
        <taxon>Bacilli</taxon>
        <taxon>Lactobacillales</taxon>
        <taxon>Streptococcaceae</taxon>
        <taxon>Streptococcus</taxon>
    </lineage>
</organism>
<gene>
    <name type="primary">recF</name>
    <name type="ordered locus">SPy_2204</name>
    <name type="ordered locus">M5005_Spy1855</name>
</gene>
<protein>
    <recommendedName>
        <fullName>DNA replication and repair protein RecF</fullName>
    </recommendedName>
</protein>
<feature type="chain" id="PRO_0000196474" description="DNA replication and repair protein RecF">
    <location>
        <begin position="1"/>
        <end position="368"/>
    </location>
</feature>
<feature type="binding site" evidence="2">
    <location>
        <begin position="30"/>
        <end position="37"/>
    </location>
    <ligand>
        <name>ATP</name>
        <dbReference type="ChEBI" id="CHEBI:30616"/>
    </ligand>
</feature>
<evidence type="ECO:0000250" key="1"/>
<evidence type="ECO:0000255" key="2"/>
<evidence type="ECO:0000305" key="3"/>
<dbReference type="EMBL" id="AE004092">
    <property type="protein sequence ID" value="AAK34832.1"/>
    <property type="molecule type" value="Genomic_DNA"/>
</dbReference>
<dbReference type="EMBL" id="CP000017">
    <property type="protein sequence ID" value="AAZ52473.1"/>
    <property type="molecule type" value="Genomic_DNA"/>
</dbReference>
<dbReference type="RefSeq" id="NP_270111.1">
    <property type="nucleotide sequence ID" value="NC_002737.2"/>
</dbReference>
<dbReference type="SMR" id="P0C0D1"/>
<dbReference type="PaxDb" id="1314-HKU360_01965"/>
<dbReference type="KEGG" id="spy:SPy_2204"/>
<dbReference type="KEGG" id="spz:M5005_Spy1855"/>
<dbReference type="PATRIC" id="fig|160490.10.peg.1909"/>
<dbReference type="HOGENOM" id="CLU_040267_0_1_9"/>
<dbReference type="OMA" id="GESWSYA"/>
<dbReference type="Proteomes" id="UP000000750">
    <property type="component" value="Chromosome"/>
</dbReference>
<dbReference type="GO" id="GO:0005737">
    <property type="term" value="C:cytoplasm"/>
    <property type="evidence" value="ECO:0007669"/>
    <property type="project" value="UniProtKB-SubCell"/>
</dbReference>
<dbReference type="GO" id="GO:0005524">
    <property type="term" value="F:ATP binding"/>
    <property type="evidence" value="ECO:0007669"/>
    <property type="project" value="UniProtKB-UniRule"/>
</dbReference>
<dbReference type="GO" id="GO:0003697">
    <property type="term" value="F:single-stranded DNA binding"/>
    <property type="evidence" value="ECO:0007669"/>
    <property type="project" value="UniProtKB-UniRule"/>
</dbReference>
<dbReference type="GO" id="GO:0006260">
    <property type="term" value="P:DNA replication"/>
    <property type="evidence" value="ECO:0007669"/>
    <property type="project" value="UniProtKB-UniRule"/>
</dbReference>
<dbReference type="GO" id="GO:0000731">
    <property type="term" value="P:DNA synthesis involved in DNA repair"/>
    <property type="evidence" value="ECO:0007669"/>
    <property type="project" value="TreeGrafter"/>
</dbReference>
<dbReference type="GO" id="GO:0006302">
    <property type="term" value="P:double-strand break repair"/>
    <property type="evidence" value="ECO:0007669"/>
    <property type="project" value="TreeGrafter"/>
</dbReference>
<dbReference type="GO" id="GO:0009432">
    <property type="term" value="P:SOS response"/>
    <property type="evidence" value="ECO:0007669"/>
    <property type="project" value="UniProtKB-UniRule"/>
</dbReference>
<dbReference type="CDD" id="cd03242">
    <property type="entry name" value="ABC_RecF"/>
    <property type="match status" value="1"/>
</dbReference>
<dbReference type="Gene3D" id="3.40.50.300">
    <property type="entry name" value="P-loop containing nucleotide triphosphate hydrolases"/>
    <property type="match status" value="1"/>
</dbReference>
<dbReference type="Gene3D" id="1.20.1050.90">
    <property type="entry name" value="RecF/RecN/SMC, N-terminal domain"/>
    <property type="match status" value="1"/>
</dbReference>
<dbReference type="HAMAP" id="MF_00365">
    <property type="entry name" value="RecF"/>
    <property type="match status" value="1"/>
</dbReference>
<dbReference type="InterPro" id="IPR001238">
    <property type="entry name" value="DNA-binding_RecF"/>
</dbReference>
<dbReference type="InterPro" id="IPR018078">
    <property type="entry name" value="DNA-binding_RecF_CS"/>
</dbReference>
<dbReference type="InterPro" id="IPR027417">
    <property type="entry name" value="P-loop_NTPase"/>
</dbReference>
<dbReference type="InterPro" id="IPR003395">
    <property type="entry name" value="RecF/RecN/SMC_N"/>
</dbReference>
<dbReference type="InterPro" id="IPR042174">
    <property type="entry name" value="RecF_2"/>
</dbReference>
<dbReference type="NCBIfam" id="TIGR00611">
    <property type="entry name" value="recf"/>
    <property type="match status" value="1"/>
</dbReference>
<dbReference type="PANTHER" id="PTHR32182">
    <property type="entry name" value="DNA REPLICATION AND REPAIR PROTEIN RECF"/>
    <property type="match status" value="1"/>
</dbReference>
<dbReference type="PANTHER" id="PTHR32182:SF0">
    <property type="entry name" value="DNA REPLICATION AND REPAIR PROTEIN RECF"/>
    <property type="match status" value="1"/>
</dbReference>
<dbReference type="Pfam" id="PF02463">
    <property type="entry name" value="SMC_N"/>
    <property type="match status" value="1"/>
</dbReference>
<dbReference type="SUPFAM" id="SSF52540">
    <property type="entry name" value="P-loop containing nucleoside triphosphate hydrolases"/>
    <property type="match status" value="1"/>
</dbReference>
<dbReference type="PROSITE" id="PS00617">
    <property type="entry name" value="RECF_1"/>
    <property type="match status" value="1"/>
</dbReference>
<dbReference type="PROSITE" id="PS00618">
    <property type="entry name" value="RECF_2"/>
    <property type="match status" value="1"/>
</dbReference>
<name>RECF_STRP1</name>
<comment type="function">
    <text evidence="1">The RecF protein is involved in DNA metabolism; it is required for DNA replication and normal SOS inducibility. RecF binds preferentially to single-stranded, linear DNA. It also seems to bind ATP (By similarity).</text>
</comment>
<comment type="subcellular location">
    <subcellularLocation>
        <location evidence="1">Cytoplasm</location>
    </subcellularLocation>
</comment>
<comment type="similarity">
    <text evidence="3">Belongs to the RecF family.</text>
</comment>